<protein>
    <recommendedName>
        <fullName evidence="6">Nicotianamine aminotransferase B</fullName>
        <ecNumber>2.6.1.80</ecNumber>
    </recommendedName>
</protein>
<keyword id="KW-0032">Aminotransferase</keyword>
<keyword id="KW-0663">Pyridoxal phosphate</keyword>
<keyword id="KW-0808">Transferase</keyword>
<gene>
    <name evidence="7" type="primary">naat-B</name>
</gene>
<comment type="function">
    <text evidence="4">Involved in biosynthesis of mugineic acid family phytosiderophores.</text>
</comment>
<comment type="catalytic activity">
    <reaction evidence="4">
        <text>nicotianamine + 2-oxoglutarate = 3''-deamino-3''-oxonicotianamine + L-glutamate</text>
        <dbReference type="Rhea" id="RHEA:22104"/>
        <dbReference type="ChEBI" id="CHEBI:16810"/>
        <dbReference type="ChEBI" id="CHEBI:29985"/>
        <dbReference type="ChEBI" id="CHEBI:58249"/>
        <dbReference type="ChEBI" id="CHEBI:58685"/>
        <dbReference type="EC" id="2.6.1.80"/>
    </reaction>
</comment>
<comment type="cofactor">
    <cofactor evidence="1">
        <name>pyridoxal 5'-phosphate</name>
        <dbReference type="ChEBI" id="CHEBI:597326"/>
    </cofactor>
</comment>
<comment type="tissue specificity">
    <text evidence="4">Expressed in roots, but not in leaves.</text>
</comment>
<comment type="induction">
    <text evidence="4">By iron deficiency. Only a trace amount of expression is detected when sufficient iron is present.</text>
</comment>
<comment type="similarity">
    <text evidence="2">Belongs to the class-I pyridoxal-phosphate-dependent aminotransferase family.</text>
</comment>
<name>NAATB_HORVU</name>
<proteinExistence type="evidence at protein level"/>
<feature type="chain" id="PRO_0000405351" description="Nicotianamine aminotransferase B">
    <location>
        <begin position="1"/>
        <end position="551"/>
    </location>
</feature>
<feature type="region of interest" description="Disordered" evidence="3">
    <location>
        <begin position="24"/>
        <end position="127"/>
    </location>
</feature>
<feature type="compositionally biased region" description="Basic and acidic residues" evidence="3">
    <location>
        <begin position="86"/>
        <end position="96"/>
    </location>
</feature>
<feature type="compositionally biased region" description="Low complexity" evidence="3">
    <location>
        <begin position="111"/>
        <end position="123"/>
    </location>
</feature>
<feature type="modified residue" description="N6-(pyridoxal phosphate)lysine" evidence="1">
    <location>
        <position position="379"/>
    </location>
</feature>
<feature type="sequence conflict" description="In Ref. 1; BAA87054." evidence="5" ref="1">
    <original>V</original>
    <variation>L</variation>
    <location>
        <position position="198"/>
    </location>
</feature>
<organism>
    <name type="scientific">Hordeum vulgare</name>
    <name type="common">Barley</name>
    <dbReference type="NCBI Taxonomy" id="4513"/>
    <lineage>
        <taxon>Eukaryota</taxon>
        <taxon>Viridiplantae</taxon>
        <taxon>Streptophyta</taxon>
        <taxon>Embryophyta</taxon>
        <taxon>Tracheophyta</taxon>
        <taxon>Spermatophyta</taxon>
        <taxon>Magnoliopsida</taxon>
        <taxon>Liliopsida</taxon>
        <taxon>Poales</taxon>
        <taxon>Poaceae</taxon>
        <taxon>BOP clade</taxon>
        <taxon>Pooideae</taxon>
        <taxon>Triticodae</taxon>
        <taxon>Triticeae</taxon>
        <taxon>Hordeinae</taxon>
        <taxon>Hordeum</taxon>
    </lineage>
</organism>
<sequence>MATVRQSDGVAANGLAVAAAANGKSNGHGVAAAVNGKSNGHGVDADANGKSNGHGVAADANGKSNGHAEATANGHGEATANGKTNGHRESNGHAEAADANGESNEHAEDSAANGESNGHAAAAAEEEEAVEWNFAGAKDGVLAATGANMSIRAIRYKISASVQEKGPRPVLPLAHGDPSVFPAFRTAVEAEDAVAAAVRTGQFNCYPAGVGLPAARSAVAEHLSQGVPYMLSADDVFLTAGGTQAIEVIIPVLAQTAGANILLPRPGYPNYEARAAFNRLEVRHFDLIPDKGWEIDIDSLESIADKNTTAMVIINPNNPCGSVYSYDHLSKVAEVAKRLGILVIADEVYGKLVLGSAPFIPMGVFGHITPVLSIGSLSKSWIVPGWRLGWVAVYDPRKILQETKISTSITNYLNVSTDPATFIQAALPQILENTKEDFFKAIIGLLKESSEICYKQIKENKYITCPHKPEGSMFVMVKLNLHLLEEIDDDIDFCCKLAKEESVILCPGSVLGMANWVRITFACVPSSLQDGLGRIKSFCQRNKKRNSSDDC</sequence>
<accession>Q9ST03</accession>
<accession>Q9ST44</accession>
<dbReference type="EC" id="2.6.1.80"/>
<dbReference type="EMBL" id="AB005788">
    <property type="protein sequence ID" value="BAA87053.1"/>
    <property type="molecule type" value="mRNA"/>
</dbReference>
<dbReference type="EMBL" id="AB024006">
    <property type="protein sequence ID" value="BAA87054.1"/>
    <property type="molecule type" value="Genomic_DNA"/>
</dbReference>
<dbReference type="SMR" id="Q9ST03"/>
<dbReference type="KEGG" id="ag:BAA87053"/>
<dbReference type="BioCyc" id="MetaCyc:MONOMER-13947"/>
<dbReference type="BRENDA" id="2.6.1.80">
    <property type="organism ID" value="2687"/>
</dbReference>
<dbReference type="ExpressionAtlas" id="Q9ST03">
    <property type="expression patterns" value="baseline and differential"/>
</dbReference>
<dbReference type="GO" id="GO:0004838">
    <property type="term" value="F:L-tyrosine-2-oxoglutarate transaminase activity"/>
    <property type="evidence" value="ECO:0007669"/>
    <property type="project" value="TreeGrafter"/>
</dbReference>
<dbReference type="GO" id="GO:0033855">
    <property type="term" value="F:nicotianamine aminotransferase activity"/>
    <property type="evidence" value="ECO:0000314"/>
    <property type="project" value="UniProtKB"/>
</dbReference>
<dbReference type="GO" id="GO:0030170">
    <property type="term" value="F:pyridoxal phosphate binding"/>
    <property type="evidence" value="ECO:0007669"/>
    <property type="project" value="InterPro"/>
</dbReference>
<dbReference type="GO" id="GO:0009058">
    <property type="term" value="P:biosynthetic process"/>
    <property type="evidence" value="ECO:0007669"/>
    <property type="project" value="InterPro"/>
</dbReference>
<dbReference type="GO" id="GO:0006572">
    <property type="term" value="P:tyrosine catabolic process"/>
    <property type="evidence" value="ECO:0007669"/>
    <property type="project" value="TreeGrafter"/>
</dbReference>
<dbReference type="CDD" id="cd00609">
    <property type="entry name" value="AAT_like"/>
    <property type="match status" value="1"/>
</dbReference>
<dbReference type="FunFam" id="3.90.1150.10:FF:000040">
    <property type="entry name" value="Tyrosine aminotransferase"/>
    <property type="match status" value="1"/>
</dbReference>
<dbReference type="FunFam" id="3.40.640.10:FF:000048">
    <property type="entry name" value="tyrosine aminotransferase"/>
    <property type="match status" value="1"/>
</dbReference>
<dbReference type="Gene3D" id="3.90.1150.10">
    <property type="entry name" value="Aspartate Aminotransferase, domain 1"/>
    <property type="match status" value="1"/>
</dbReference>
<dbReference type="Gene3D" id="3.40.640.10">
    <property type="entry name" value="Type I PLP-dependent aspartate aminotransferase-like (Major domain)"/>
    <property type="match status" value="1"/>
</dbReference>
<dbReference type="InterPro" id="IPR004839">
    <property type="entry name" value="Aminotransferase_I/II_large"/>
</dbReference>
<dbReference type="InterPro" id="IPR015424">
    <property type="entry name" value="PyrdxlP-dep_Trfase"/>
</dbReference>
<dbReference type="InterPro" id="IPR015421">
    <property type="entry name" value="PyrdxlP-dep_Trfase_major"/>
</dbReference>
<dbReference type="InterPro" id="IPR015422">
    <property type="entry name" value="PyrdxlP-dep_Trfase_small"/>
</dbReference>
<dbReference type="InterPro" id="IPR005958">
    <property type="entry name" value="TyrNic_aminoTrfase"/>
</dbReference>
<dbReference type="NCBIfam" id="TIGR01265">
    <property type="entry name" value="tyr_nico_aTase"/>
    <property type="match status" value="1"/>
</dbReference>
<dbReference type="PANTHER" id="PTHR45744:SF5">
    <property type="entry name" value="NICOTIANAMINE AMINOTRANSFERASE 1"/>
    <property type="match status" value="1"/>
</dbReference>
<dbReference type="PANTHER" id="PTHR45744">
    <property type="entry name" value="TYROSINE AMINOTRANSFERASE"/>
    <property type="match status" value="1"/>
</dbReference>
<dbReference type="Pfam" id="PF00155">
    <property type="entry name" value="Aminotran_1_2"/>
    <property type="match status" value="1"/>
</dbReference>
<dbReference type="SUPFAM" id="SSF53383">
    <property type="entry name" value="PLP-dependent transferases"/>
    <property type="match status" value="1"/>
</dbReference>
<evidence type="ECO:0000250" key="1">
    <source>
        <dbReference type="UniProtKB" id="P04694"/>
    </source>
</evidence>
<evidence type="ECO:0000255" key="2"/>
<evidence type="ECO:0000256" key="3">
    <source>
        <dbReference type="SAM" id="MobiDB-lite"/>
    </source>
</evidence>
<evidence type="ECO:0000269" key="4">
    <source>
    </source>
</evidence>
<evidence type="ECO:0000305" key="5"/>
<evidence type="ECO:0000312" key="6">
    <source>
        <dbReference type="EMBL" id="BAA87053.1"/>
    </source>
</evidence>
<evidence type="ECO:0000312" key="7">
    <source>
        <dbReference type="EMBL" id="BAA87054.1"/>
    </source>
</evidence>
<reference evidence="5 7" key="1">
    <citation type="journal article" date="1999" name="Plant Physiol.">
        <title>Cloning two genes for nicotianamine aminotransferase, a critical enzyme in iron acquisition (Strategy II) in graminaceous plants.</title>
        <authorList>
            <person name="Takahashi M."/>
            <person name="Yamaguchi H."/>
            <person name="Nakanishi H."/>
            <person name="Shioiri T."/>
            <person name="Nishizawa N.K."/>
            <person name="Mori S."/>
        </authorList>
    </citation>
    <scope>NUCLEOTIDE SEQUENCE [GENOMIC DNA / MRNA]</scope>
    <scope>FUNCTION</scope>
    <scope>CATALYTIC ACTIVITY</scope>
    <scope>TISSUE SPECIFICITY</scope>
    <scope>INDUCTION</scope>
    <source>
        <strain evidence="4">cv. Ehimehadaka No.1</strain>
        <tissue evidence="6">Root</tissue>
    </source>
</reference>